<keyword id="KW-0143">Chaperone</keyword>
<keyword id="KW-0963">Cytoplasm</keyword>
<keyword id="KW-0694">RNA-binding</keyword>
<name>PROQ_SALPK</name>
<comment type="function">
    <text evidence="1">RNA chaperone with significant RNA binding, RNA strand exchange and RNA duplexing activities. May regulate ProP activity through an RNA-based, post-transcriptional mechanism.</text>
</comment>
<comment type="subcellular location">
    <subcellularLocation>
        <location evidence="1">Cytoplasm</location>
    </subcellularLocation>
</comment>
<comment type="similarity">
    <text evidence="1">Belongs to the ProQ family.</text>
</comment>
<evidence type="ECO:0000255" key="1">
    <source>
        <dbReference type="HAMAP-Rule" id="MF_00749"/>
    </source>
</evidence>
<evidence type="ECO:0000256" key="2">
    <source>
        <dbReference type="SAM" id="MobiDB-lite"/>
    </source>
</evidence>
<dbReference type="EMBL" id="FM200053">
    <property type="protein sequence ID" value="CAR59108.1"/>
    <property type="molecule type" value="Genomic_DNA"/>
</dbReference>
<dbReference type="RefSeq" id="WP_000431401.1">
    <property type="nucleotide sequence ID" value="NC_011147.1"/>
</dbReference>
<dbReference type="SMR" id="B5BHB0"/>
<dbReference type="KEGG" id="sek:SSPA0957a"/>
<dbReference type="HOGENOM" id="CLU_113254_0_0_6"/>
<dbReference type="Proteomes" id="UP000001869">
    <property type="component" value="Chromosome"/>
</dbReference>
<dbReference type="GO" id="GO:0005829">
    <property type="term" value="C:cytosol"/>
    <property type="evidence" value="ECO:0007669"/>
    <property type="project" value="TreeGrafter"/>
</dbReference>
<dbReference type="GO" id="GO:0033592">
    <property type="term" value="F:RNA strand annealing activity"/>
    <property type="evidence" value="ECO:0007669"/>
    <property type="project" value="UniProtKB-UniRule"/>
</dbReference>
<dbReference type="GO" id="GO:0034057">
    <property type="term" value="F:RNA strand-exchange activity"/>
    <property type="evidence" value="ECO:0007669"/>
    <property type="project" value="UniProtKB-UniRule"/>
</dbReference>
<dbReference type="GO" id="GO:0010608">
    <property type="term" value="P:post-transcriptional regulation of gene expression"/>
    <property type="evidence" value="ECO:0007669"/>
    <property type="project" value="InterPro"/>
</dbReference>
<dbReference type="FunFam" id="1.10.1710.10:FF:000001">
    <property type="entry name" value="RNA chaperone ProQ"/>
    <property type="match status" value="1"/>
</dbReference>
<dbReference type="Gene3D" id="1.10.1710.10">
    <property type="entry name" value="ProQ/FinO domain"/>
    <property type="match status" value="1"/>
</dbReference>
<dbReference type="HAMAP" id="MF_00749">
    <property type="entry name" value="ProQ"/>
    <property type="match status" value="1"/>
</dbReference>
<dbReference type="InterPro" id="IPR023529">
    <property type="entry name" value="ProQ"/>
</dbReference>
<dbReference type="InterPro" id="IPR016103">
    <property type="entry name" value="ProQ/FinO"/>
</dbReference>
<dbReference type="InterPro" id="IPR036442">
    <property type="entry name" value="ProQ/FinO_sf"/>
</dbReference>
<dbReference type="InterPro" id="IPR035236">
    <property type="entry name" value="ProQ_C"/>
</dbReference>
<dbReference type="NCBIfam" id="NF003434">
    <property type="entry name" value="PRK04950.1"/>
    <property type="match status" value="1"/>
</dbReference>
<dbReference type="PANTHER" id="PTHR38106">
    <property type="entry name" value="RNA CHAPERONE PROQ"/>
    <property type="match status" value="1"/>
</dbReference>
<dbReference type="PANTHER" id="PTHR38106:SF1">
    <property type="entry name" value="RNA CHAPERONE PROQ"/>
    <property type="match status" value="1"/>
</dbReference>
<dbReference type="Pfam" id="PF04352">
    <property type="entry name" value="ProQ"/>
    <property type="match status" value="1"/>
</dbReference>
<dbReference type="Pfam" id="PF17516">
    <property type="entry name" value="ProQ_C"/>
    <property type="match status" value="1"/>
</dbReference>
<dbReference type="SMART" id="SM00945">
    <property type="entry name" value="ProQ"/>
    <property type="match status" value="1"/>
</dbReference>
<dbReference type="SUPFAM" id="SSF48657">
    <property type="entry name" value="FinO-like"/>
    <property type="match status" value="1"/>
</dbReference>
<reference key="1">
    <citation type="journal article" date="2009" name="BMC Genomics">
        <title>Pseudogene accumulation in the evolutionary histories of Salmonella enterica serovars Paratyphi A and Typhi.</title>
        <authorList>
            <person name="Holt K.E."/>
            <person name="Thomson N.R."/>
            <person name="Wain J."/>
            <person name="Langridge G.C."/>
            <person name="Hasan R."/>
            <person name="Bhutta Z.A."/>
            <person name="Quail M.A."/>
            <person name="Norbertczak H."/>
            <person name="Walker D."/>
            <person name="Simmonds M."/>
            <person name="White B."/>
            <person name="Bason N."/>
            <person name="Mungall K."/>
            <person name="Dougan G."/>
            <person name="Parkhill J."/>
        </authorList>
    </citation>
    <scope>NUCLEOTIDE SEQUENCE [LARGE SCALE GENOMIC DNA]</scope>
    <source>
        <strain>AKU_12601</strain>
    </source>
</reference>
<sequence length="228" mass="25438">MENQPKLNSSKEVIAFLAERFPHCFSAEGEARPLKIGIFQDLVERVGGEMNLSKTQLRSALRLYTSSWRYLYGVKPGATRVDLDGNPCGELEEQHVEHARKQLEEAKARVQAQRAEQQAKKREAAAAAGEKEDAPRRERKPRPVARRKEGAERKPRADKPTTKAPRAPREEKHTPVSDISVLTVGQSLKVKAGNNAMDATVLEITKDGVRVQLNSGMSLIVRAEHLVF</sequence>
<proteinExistence type="inferred from homology"/>
<organism>
    <name type="scientific">Salmonella paratyphi A (strain AKU_12601)</name>
    <dbReference type="NCBI Taxonomy" id="554290"/>
    <lineage>
        <taxon>Bacteria</taxon>
        <taxon>Pseudomonadati</taxon>
        <taxon>Pseudomonadota</taxon>
        <taxon>Gammaproteobacteria</taxon>
        <taxon>Enterobacterales</taxon>
        <taxon>Enterobacteriaceae</taxon>
        <taxon>Salmonella</taxon>
    </lineage>
</organism>
<gene>
    <name evidence="1" type="primary">proQ</name>
    <name type="ordered locus">SSPA0957.1</name>
    <name type="ORF">SSPA0957a</name>
</gene>
<accession>B5BHB0</accession>
<protein>
    <recommendedName>
        <fullName evidence="1">RNA chaperone ProQ</fullName>
    </recommendedName>
</protein>
<feature type="chain" id="PRO_1000133307" description="RNA chaperone ProQ">
    <location>
        <begin position="1"/>
        <end position="228"/>
    </location>
</feature>
<feature type="region of interest" description="Disordered" evidence="2">
    <location>
        <begin position="107"/>
        <end position="178"/>
    </location>
</feature>
<feature type="compositionally biased region" description="Basic and acidic residues" evidence="2">
    <location>
        <begin position="117"/>
        <end position="136"/>
    </location>
</feature>
<feature type="compositionally biased region" description="Basic and acidic residues" evidence="2">
    <location>
        <begin position="146"/>
        <end position="175"/>
    </location>
</feature>